<protein>
    <recommendedName>
        <fullName evidence="1">Endonuclease MutS2</fullName>
        <ecNumber evidence="1">3.1.-.-</ecNumber>
    </recommendedName>
    <alternativeName>
        <fullName evidence="1">Ribosome-associated protein quality control-upstream factor</fullName>
        <shortName evidence="1">RQC-upstream factor</shortName>
        <shortName evidence="1">RqcU</shortName>
        <ecNumber evidence="1">3.6.4.-</ecNumber>
    </alternativeName>
</protein>
<reference key="1">
    <citation type="journal article" date="2008" name="Antimicrob. Agents Chemother.">
        <title>Mutated response regulator graR is responsible for phenotypic conversion of Staphylococcus aureus from heterogeneous vancomycin-intermediate resistance to vancomycin-intermediate resistance.</title>
        <authorList>
            <person name="Neoh H.-M."/>
            <person name="Cui L."/>
            <person name="Yuzawa H."/>
            <person name="Takeuchi F."/>
            <person name="Matsuo M."/>
            <person name="Hiramatsu K."/>
        </authorList>
    </citation>
    <scope>NUCLEOTIDE SEQUENCE [LARGE SCALE GENOMIC DNA]</scope>
    <source>
        <strain>Mu3 / ATCC 700698</strain>
    </source>
</reference>
<sequence>MRQKTLDVLEFEKIKSLVANETISDLGLEKVNQMMPATNFETVVFQMEETDEIAQIYNKHRLPSLSGLSKVSAFIHRADIGGVLNVSELNLIKRLIQVQNQFKTFYNQLVEEDEGVKYPILDDKMNQLPVLTDLFHQINETCDTYDLYDNASYELQGIRSKISSTNQRIRQNLDRIVKSQANQKKLSDAIVTVRNERNVIPVKAEYRQDFNGIVHDQSASGQTLYIEPSSVVEMNNQISRLRHDEAIEKERVLTQLTGYVAADKDALLVAEQVMGQLDFLIAKARYSRSIKGTKPIFKEERTVYLPKAYHPLLNRETVVANTIEFMEDIETVIITGPNTGGKTVTLKTLGLIIVMAQSGLLIPTLDGSQLSVFKNVYCDIGDEQSIEQSLSTFSSHMTNIVEILKHADKHSLVLFDELGAGTDPSEGAALAMSILDHVRKIGSLVMATTHYPELKAYSYNREGVMNASVEFDVDTLSPTYKLLMGVPGRSNAFDISKKLGLSLNIINKAKTMIGTDEKEINEMIESLERNYKRVETQRLELDRLVKEAEQVHDDLSKQYQQFQNYEKSLIEEAKEKANQKIKAATKEADDIIKDLRQLREQKGADVKEHELIDKKKRLDDHYEAKSIKQNVQKQKYDKIVAGDEVKVLSYGQKGEVLEIVNDEEAIVQMGIIKMKLPIEDLEKKQKEKVKPTKMVTRQNRQTIKTELDLRGYRYEDALIELDQYLDQAVLSNYEQVYIIHGKGTGALQKGVQQHLKKHKSVSDFRGGMPSEGGFGVTVATLK</sequence>
<keyword id="KW-0067">ATP-binding</keyword>
<keyword id="KW-0238">DNA-binding</keyword>
<keyword id="KW-0255">Endonuclease</keyword>
<keyword id="KW-0378">Hydrolase</keyword>
<keyword id="KW-0540">Nuclease</keyword>
<keyword id="KW-0547">Nucleotide-binding</keyword>
<keyword id="KW-0694">RNA-binding</keyword>
<keyword id="KW-0699">rRNA-binding</keyword>
<gene>
    <name evidence="1" type="primary">mutS2</name>
    <name evidence="1" type="synonym">rqcU</name>
    <name type="ordered locus">SAHV_1135</name>
</gene>
<proteinExistence type="inferred from homology"/>
<dbReference type="EC" id="3.1.-.-" evidence="1"/>
<dbReference type="EC" id="3.6.4.-" evidence="1"/>
<dbReference type="EMBL" id="AP009324">
    <property type="protein sequence ID" value="BAF78018.1"/>
    <property type="molecule type" value="Genomic_DNA"/>
</dbReference>
<dbReference type="RefSeq" id="WP_001249275.1">
    <property type="nucleotide sequence ID" value="NC_009782.1"/>
</dbReference>
<dbReference type="SMR" id="A7X169"/>
<dbReference type="KEGG" id="saw:SAHV_1135"/>
<dbReference type="HOGENOM" id="CLU_011252_2_1_9"/>
<dbReference type="GO" id="GO:0005524">
    <property type="term" value="F:ATP binding"/>
    <property type="evidence" value="ECO:0007669"/>
    <property type="project" value="UniProtKB-UniRule"/>
</dbReference>
<dbReference type="GO" id="GO:0016887">
    <property type="term" value="F:ATP hydrolysis activity"/>
    <property type="evidence" value="ECO:0007669"/>
    <property type="project" value="InterPro"/>
</dbReference>
<dbReference type="GO" id="GO:0140664">
    <property type="term" value="F:ATP-dependent DNA damage sensor activity"/>
    <property type="evidence" value="ECO:0007669"/>
    <property type="project" value="InterPro"/>
</dbReference>
<dbReference type="GO" id="GO:0004519">
    <property type="term" value="F:endonuclease activity"/>
    <property type="evidence" value="ECO:0007669"/>
    <property type="project" value="UniProtKB-UniRule"/>
</dbReference>
<dbReference type="GO" id="GO:0030983">
    <property type="term" value="F:mismatched DNA binding"/>
    <property type="evidence" value="ECO:0007669"/>
    <property type="project" value="InterPro"/>
</dbReference>
<dbReference type="GO" id="GO:0043023">
    <property type="term" value="F:ribosomal large subunit binding"/>
    <property type="evidence" value="ECO:0007669"/>
    <property type="project" value="UniProtKB-UniRule"/>
</dbReference>
<dbReference type="GO" id="GO:0019843">
    <property type="term" value="F:rRNA binding"/>
    <property type="evidence" value="ECO:0007669"/>
    <property type="project" value="UniProtKB-UniRule"/>
</dbReference>
<dbReference type="GO" id="GO:0006298">
    <property type="term" value="P:mismatch repair"/>
    <property type="evidence" value="ECO:0007669"/>
    <property type="project" value="InterPro"/>
</dbReference>
<dbReference type="GO" id="GO:0045910">
    <property type="term" value="P:negative regulation of DNA recombination"/>
    <property type="evidence" value="ECO:0007669"/>
    <property type="project" value="InterPro"/>
</dbReference>
<dbReference type="GO" id="GO:0072344">
    <property type="term" value="P:rescue of stalled ribosome"/>
    <property type="evidence" value="ECO:0007669"/>
    <property type="project" value="UniProtKB-UniRule"/>
</dbReference>
<dbReference type="CDD" id="cd03280">
    <property type="entry name" value="ABC_MutS2"/>
    <property type="match status" value="1"/>
</dbReference>
<dbReference type="FunFam" id="3.30.1370.110:FF:000006">
    <property type="entry name" value="Endonuclease MutS2"/>
    <property type="match status" value="1"/>
</dbReference>
<dbReference type="FunFam" id="3.40.50.300:FF:000830">
    <property type="entry name" value="Endonuclease MutS2"/>
    <property type="match status" value="1"/>
</dbReference>
<dbReference type="Gene3D" id="3.30.1370.110">
    <property type="match status" value="1"/>
</dbReference>
<dbReference type="Gene3D" id="3.40.50.300">
    <property type="entry name" value="P-loop containing nucleotide triphosphate hydrolases"/>
    <property type="match status" value="1"/>
</dbReference>
<dbReference type="HAMAP" id="MF_00092">
    <property type="entry name" value="MutS2"/>
    <property type="match status" value="1"/>
</dbReference>
<dbReference type="InterPro" id="IPR000432">
    <property type="entry name" value="DNA_mismatch_repair_MutS_C"/>
</dbReference>
<dbReference type="InterPro" id="IPR007696">
    <property type="entry name" value="DNA_mismatch_repair_MutS_core"/>
</dbReference>
<dbReference type="InterPro" id="IPR036187">
    <property type="entry name" value="DNA_mismatch_repair_MutS_sf"/>
</dbReference>
<dbReference type="InterPro" id="IPR046893">
    <property type="entry name" value="MSSS"/>
</dbReference>
<dbReference type="InterPro" id="IPR045076">
    <property type="entry name" value="MutS"/>
</dbReference>
<dbReference type="InterPro" id="IPR005747">
    <property type="entry name" value="MutS2"/>
</dbReference>
<dbReference type="InterPro" id="IPR027417">
    <property type="entry name" value="P-loop_NTPase"/>
</dbReference>
<dbReference type="InterPro" id="IPR002625">
    <property type="entry name" value="Smr_dom"/>
</dbReference>
<dbReference type="InterPro" id="IPR036063">
    <property type="entry name" value="Smr_dom_sf"/>
</dbReference>
<dbReference type="NCBIfam" id="TIGR01069">
    <property type="entry name" value="mutS2"/>
    <property type="match status" value="1"/>
</dbReference>
<dbReference type="PANTHER" id="PTHR48466:SF2">
    <property type="entry name" value="OS10G0509000 PROTEIN"/>
    <property type="match status" value="1"/>
</dbReference>
<dbReference type="PANTHER" id="PTHR48466">
    <property type="entry name" value="OS10G0509000 PROTEIN-RELATED"/>
    <property type="match status" value="1"/>
</dbReference>
<dbReference type="Pfam" id="PF20297">
    <property type="entry name" value="MSSS"/>
    <property type="match status" value="1"/>
</dbReference>
<dbReference type="Pfam" id="PF00488">
    <property type="entry name" value="MutS_V"/>
    <property type="match status" value="1"/>
</dbReference>
<dbReference type="Pfam" id="PF01713">
    <property type="entry name" value="Smr"/>
    <property type="match status" value="1"/>
</dbReference>
<dbReference type="PIRSF" id="PIRSF005814">
    <property type="entry name" value="MutS_YshD"/>
    <property type="match status" value="1"/>
</dbReference>
<dbReference type="SMART" id="SM00534">
    <property type="entry name" value="MUTSac"/>
    <property type="match status" value="1"/>
</dbReference>
<dbReference type="SMART" id="SM00533">
    <property type="entry name" value="MUTSd"/>
    <property type="match status" value="1"/>
</dbReference>
<dbReference type="SMART" id="SM00463">
    <property type="entry name" value="SMR"/>
    <property type="match status" value="1"/>
</dbReference>
<dbReference type="SUPFAM" id="SSF48334">
    <property type="entry name" value="DNA repair protein MutS, domain III"/>
    <property type="match status" value="1"/>
</dbReference>
<dbReference type="SUPFAM" id="SSF52540">
    <property type="entry name" value="P-loop containing nucleoside triphosphate hydrolases"/>
    <property type="match status" value="1"/>
</dbReference>
<dbReference type="SUPFAM" id="SSF160443">
    <property type="entry name" value="SMR domain-like"/>
    <property type="match status" value="1"/>
</dbReference>
<dbReference type="PROSITE" id="PS00486">
    <property type="entry name" value="DNA_MISMATCH_REPAIR_2"/>
    <property type="match status" value="1"/>
</dbReference>
<dbReference type="PROSITE" id="PS50828">
    <property type="entry name" value="SMR"/>
    <property type="match status" value="1"/>
</dbReference>
<evidence type="ECO:0000255" key="1">
    <source>
        <dbReference type="HAMAP-Rule" id="MF_00092"/>
    </source>
</evidence>
<comment type="function">
    <text evidence="1">Endonuclease that is involved in the suppression of homologous recombination and thus may have a key role in the control of bacterial genetic diversity.</text>
</comment>
<comment type="function">
    <text evidence="1">Acts as a ribosome collision sensor, splitting the ribosome into its 2 subunits. Detects stalled/collided 70S ribosomes which it binds and splits by an ATP-hydrolysis driven conformational change. Acts upstream of the ribosome quality control system (RQC), a ribosome-associated complex that mediates the extraction of incompletely synthesized nascent chains from stalled ribosomes and their subsequent degradation. Probably generates substrates for RQC.</text>
</comment>
<comment type="subunit">
    <text evidence="1">Homodimer. Binds to stalled ribosomes, contacting rRNA.</text>
</comment>
<comment type="similarity">
    <text evidence="1">Belongs to the DNA mismatch repair MutS family. MutS2 subfamily.</text>
</comment>
<feature type="chain" id="PRO_1000093377" description="Endonuclease MutS2">
    <location>
        <begin position="1"/>
        <end position="782"/>
    </location>
</feature>
<feature type="domain" description="Smr" evidence="1">
    <location>
        <begin position="707"/>
        <end position="782"/>
    </location>
</feature>
<feature type="binding site" evidence="1">
    <location>
        <begin position="336"/>
        <end position="343"/>
    </location>
    <ligand>
        <name>ATP</name>
        <dbReference type="ChEBI" id="CHEBI:30616"/>
    </ligand>
</feature>
<organism>
    <name type="scientific">Staphylococcus aureus (strain Mu3 / ATCC 700698)</name>
    <dbReference type="NCBI Taxonomy" id="418127"/>
    <lineage>
        <taxon>Bacteria</taxon>
        <taxon>Bacillati</taxon>
        <taxon>Bacillota</taxon>
        <taxon>Bacilli</taxon>
        <taxon>Bacillales</taxon>
        <taxon>Staphylococcaceae</taxon>
        <taxon>Staphylococcus</taxon>
    </lineage>
</organism>
<accession>A7X169</accession>
<name>MUTS2_STAA1</name>